<sequence>MAVEQDIFDAVVMADERFHGEGYQEGYEEGSSLGIVEGKRYGMVHGAKIGSEIGCYRGFALAWKCLLHSGAGEKDSRKMKVVEALIALLQDFPYDDPTYEKLHEDLDRIRGKFRQLCSLLNVQPDFKVTPGGSGLAF</sequence>
<name>LTO1_MOUSE</name>
<accession>Q8CH62</accession>
<accession>Q91YY7</accession>
<accession>Q922P0</accession>
<accession>Q9D7Y4</accession>
<feature type="initiator methionine" description="Removed" evidence="2">
    <location>
        <position position="1"/>
    </location>
</feature>
<feature type="chain" id="PRO_0000058076" description="Protein LTO1 homolog">
    <location>
        <begin position="2"/>
        <end position="137"/>
    </location>
</feature>
<feature type="region of interest" description="deca-GX3 motif; required for interaction with YAE1 and the CIA complex" evidence="1">
    <location>
        <begin position="22"/>
        <end position="58"/>
    </location>
</feature>
<feature type="modified residue" description="N-acetylalanine" evidence="2">
    <location>
        <position position="2"/>
    </location>
</feature>
<feature type="sequence conflict" description="In Ref. 2; BAB25842." evidence="3" ref="2">
    <original>E</original>
    <variation>G</variation>
    <location>
        <position position="73"/>
    </location>
</feature>
<comment type="function">
    <text evidence="2">The complex LTO1:YAE1 functions as a target specific adapter that probably recruits apo-ABCE1 to the cytosolic iron-sulfur protein assembly (CIA) complex machinery. May be required for biogenesis of the large ribosomal subunit and initiation of translation. May play a role in the regulation of proline metabolism and ROS production.</text>
</comment>
<comment type="subunit">
    <text evidence="2">Forms a complex with YAE1. Interacts with PYCR1 and PYCR2.</text>
</comment>
<comment type="subcellular location">
    <subcellularLocation>
        <location evidence="1">Nucleus</location>
    </subcellularLocation>
</comment>
<comment type="similarity">
    <text evidence="3">Belongs to the LTO1 family.</text>
</comment>
<comment type="sequence caution" evidence="3">
    <conflict type="erroneous initiation">
        <sequence resource="EMBL-CDS" id="AAH13564"/>
    </conflict>
    <text>Extended N-terminus.</text>
</comment>
<comment type="sequence caution" evidence="3">
    <conflict type="erroneous initiation">
        <sequence resource="EMBL-CDS" id="BAB25842"/>
    </conflict>
    <text>Extended N-terminus.</text>
</comment>
<comment type="sequence caution" evidence="3">
    <conflict type="erroneous initiation">
        <sequence resource="EMBL-CDS" id="BAC38828"/>
    </conflict>
    <text>Extended N-terminus.</text>
</comment>
<reference key="1">
    <citation type="submission" date="2001-05" db="EMBL/GenBank/DDBJ databases">
        <title>BC1 genomic locus.</title>
        <authorList>
            <person name="Raabe C.A."/>
            <person name="Kuryshev V.Y."/>
            <person name="Brosius J."/>
            <person name="Skryabin B.V."/>
        </authorList>
    </citation>
    <scope>NUCLEOTIDE SEQUENCE [GENOMIC DNA]</scope>
    <source>
        <strain>CJ7/129SV</strain>
    </source>
</reference>
<reference key="2">
    <citation type="journal article" date="2005" name="Science">
        <title>The transcriptional landscape of the mammalian genome.</title>
        <authorList>
            <person name="Carninci P."/>
            <person name="Kasukawa T."/>
            <person name="Katayama S."/>
            <person name="Gough J."/>
            <person name="Frith M.C."/>
            <person name="Maeda N."/>
            <person name="Oyama R."/>
            <person name="Ravasi T."/>
            <person name="Lenhard B."/>
            <person name="Wells C."/>
            <person name="Kodzius R."/>
            <person name="Shimokawa K."/>
            <person name="Bajic V.B."/>
            <person name="Brenner S.E."/>
            <person name="Batalov S."/>
            <person name="Forrest A.R."/>
            <person name="Zavolan M."/>
            <person name="Davis M.J."/>
            <person name="Wilming L.G."/>
            <person name="Aidinis V."/>
            <person name="Allen J.E."/>
            <person name="Ambesi-Impiombato A."/>
            <person name="Apweiler R."/>
            <person name="Aturaliya R.N."/>
            <person name="Bailey T.L."/>
            <person name="Bansal M."/>
            <person name="Baxter L."/>
            <person name="Beisel K.W."/>
            <person name="Bersano T."/>
            <person name="Bono H."/>
            <person name="Chalk A.M."/>
            <person name="Chiu K.P."/>
            <person name="Choudhary V."/>
            <person name="Christoffels A."/>
            <person name="Clutterbuck D.R."/>
            <person name="Crowe M.L."/>
            <person name="Dalla E."/>
            <person name="Dalrymple B.P."/>
            <person name="de Bono B."/>
            <person name="Della Gatta G."/>
            <person name="di Bernardo D."/>
            <person name="Down T."/>
            <person name="Engstrom P."/>
            <person name="Fagiolini M."/>
            <person name="Faulkner G."/>
            <person name="Fletcher C.F."/>
            <person name="Fukushima T."/>
            <person name="Furuno M."/>
            <person name="Futaki S."/>
            <person name="Gariboldi M."/>
            <person name="Georgii-Hemming P."/>
            <person name="Gingeras T.R."/>
            <person name="Gojobori T."/>
            <person name="Green R.E."/>
            <person name="Gustincich S."/>
            <person name="Harbers M."/>
            <person name="Hayashi Y."/>
            <person name="Hensch T.K."/>
            <person name="Hirokawa N."/>
            <person name="Hill D."/>
            <person name="Huminiecki L."/>
            <person name="Iacono M."/>
            <person name="Ikeo K."/>
            <person name="Iwama A."/>
            <person name="Ishikawa T."/>
            <person name="Jakt M."/>
            <person name="Kanapin A."/>
            <person name="Katoh M."/>
            <person name="Kawasawa Y."/>
            <person name="Kelso J."/>
            <person name="Kitamura H."/>
            <person name="Kitano H."/>
            <person name="Kollias G."/>
            <person name="Krishnan S.P."/>
            <person name="Kruger A."/>
            <person name="Kummerfeld S.K."/>
            <person name="Kurochkin I.V."/>
            <person name="Lareau L.F."/>
            <person name="Lazarevic D."/>
            <person name="Lipovich L."/>
            <person name="Liu J."/>
            <person name="Liuni S."/>
            <person name="McWilliam S."/>
            <person name="Madan Babu M."/>
            <person name="Madera M."/>
            <person name="Marchionni L."/>
            <person name="Matsuda H."/>
            <person name="Matsuzawa S."/>
            <person name="Miki H."/>
            <person name="Mignone F."/>
            <person name="Miyake S."/>
            <person name="Morris K."/>
            <person name="Mottagui-Tabar S."/>
            <person name="Mulder N."/>
            <person name="Nakano N."/>
            <person name="Nakauchi H."/>
            <person name="Ng P."/>
            <person name="Nilsson R."/>
            <person name="Nishiguchi S."/>
            <person name="Nishikawa S."/>
            <person name="Nori F."/>
            <person name="Ohara O."/>
            <person name="Okazaki Y."/>
            <person name="Orlando V."/>
            <person name="Pang K.C."/>
            <person name="Pavan W.J."/>
            <person name="Pavesi G."/>
            <person name="Pesole G."/>
            <person name="Petrovsky N."/>
            <person name="Piazza S."/>
            <person name="Reed J."/>
            <person name="Reid J.F."/>
            <person name="Ring B.Z."/>
            <person name="Ringwald M."/>
            <person name="Rost B."/>
            <person name="Ruan Y."/>
            <person name="Salzberg S.L."/>
            <person name="Sandelin A."/>
            <person name="Schneider C."/>
            <person name="Schoenbach C."/>
            <person name="Sekiguchi K."/>
            <person name="Semple C.A."/>
            <person name="Seno S."/>
            <person name="Sessa L."/>
            <person name="Sheng Y."/>
            <person name="Shibata Y."/>
            <person name="Shimada H."/>
            <person name="Shimada K."/>
            <person name="Silva D."/>
            <person name="Sinclair B."/>
            <person name="Sperling S."/>
            <person name="Stupka E."/>
            <person name="Sugiura K."/>
            <person name="Sultana R."/>
            <person name="Takenaka Y."/>
            <person name="Taki K."/>
            <person name="Tammoja K."/>
            <person name="Tan S.L."/>
            <person name="Tang S."/>
            <person name="Taylor M.S."/>
            <person name="Tegner J."/>
            <person name="Teichmann S.A."/>
            <person name="Ueda H.R."/>
            <person name="van Nimwegen E."/>
            <person name="Verardo R."/>
            <person name="Wei C.L."/>
            <person name="Yagi K."/>
            <person name="Yamanishi H."/>
            <person name="Zabarovsky E."/>
            <person name="Zhu S."/>
            <person name="Zimmer A."/>
            <person name="Hide W."/>
            <person name="Bult C."/>
            <person name="Grimmond S.M."/>
            <person name="Teasdale R.D."/>
            <person name="Liu E.T."/>
            <person name="Brusic V."/>
            <person name="Quackenbush J."/>
            <person name="Wahlestedt C."/>
            <person name="Mattick J.S."/>
            <person name="Hume D.A."/>
            <person name="Kai C."/>
            <person name="Sasaki D."/>
            <person name="Tomaru Y."/>
            <person name="Fukuda S."/>
            <person name="Kanamori-Katayama M."/>
            <person name="Suzuki M."/>
            <person name="Aoki J."/>
            <person name="Arakawa T."/>
            <person name="Iida J."/>
            <person name="Imamura K."/>
            <person name="Itoh M."/>
            <person name="Kato T."/>
            <person name="Kawaji H."/>
            <person name="Kawagashira N."/>
            <person name="Kawashima T."/>
            <person name="Kojima M."/>
            <person name="Kondo S."/>
            <person name="Konno H."/>
            <person name="Nakano K."/>
            <person name="Ninomiya N."/>
            <person name="Nishio T."/>
            <person name="Okada M."/>
            <person name="Plessy C."/>
            <person name="Shibata K."/>
            <person name="Shiraki T."/>
            <person name="Suzuki S."/>
            <person name="Tagami M."/>
            <person name="Waki K."/>
            <person name="Watahiki A."/>
            <person name="Okamura-Oho Y."/>
            <person name="Suzuki H."/>
            <person name="Kawai J."/>
            <person name="Hayashizaki Y."/>
        </authorList>
    </citation>
    <scope>NUCLEOTIDE SEQUENCE [LARGE SCALE MRNA]</scope>
    <source>
        <strain>C57BL/6J</strain>
        <tissue>Corpora quadrigemina</tissue>
        <tissue>Hippocampus</tissue>
        <tissue>Stomach</tissue>
    </source>
</reference>
<reference key="3">
    <citation type="journal article" date="2004" name="Genome Res.">
        <title>The status, quality, and expansion of the NIH full-length cDNA project: the Mammalian Gene Collection (MGC).</title>
        <authorList>
            <consortium name="The MGC Project Team"/>
        </authorList>
    </citation>
    <scope>NUCLEOTIDE SEQUENCE [LARGE SCALE MRNA]</scope>
    <source>
        <strain>Czech II</strain>
        <strain>FVB/N</strain>
        <tissue>Mammary tumor</tissue>
    </source>
</reference>
<reference key="4">
    <citation type="journal article" date="2010" name="Cell">
        <title>A tissue-specific atlas of mouse protein phosphorylation and expression.</title>
        <authorList>
            <person name="Huttlin E.L."/>
            <person name="Jedrychowski M.P."/>
            <person name="Elias J.E."/>
            <person name="Goswami T."/>
            <person name="Rad R."/>
            <person name="Beausoleil S.A."/>
            <person name="Villen J."/>
            <person name="Haas W."/>
            <person name="Sowa M.E."/>
            <person name="Gygi S.P."/>
        </authorList>
    </citation>
    <scope>IDENTIFICATION BY MASS SPECTROMETRY [LARGE SCALE ANALYSIS]</scope>
    <source>
        <tissue>Liver</tissue>
    </source>
</reference>
<protein>
    <recommendedName>
        <fullName evidence="3">Protein LTO1 homolog</fullName>
    </recommendedName>
    <alternativeName>
        <fullName>Oral cancer-overexpressed protein 1 homolog</fullName>
    </alternativeName>
</protein>
<dbReference type="EMBL" id="AF384675">
    <property type="protein sequence ID" value="AAO13812.1"/>
    <property type="molecule type" value="Genomic_DNA"/>
</dbReference>
<dbReference type="EMBL" id="AK008702">
    <property type="protein sequence ID" value="BAB25842.1"/>
    <property type="status" value="ALT_INIT"/>
    <property type="molecule type" value="mRNA"/>
</dbReference>
<dbReference type="EMBL" id="AK083244">
    <property type="protein sequence ID" value="BAC38828.1"/>
    <property type="status" value="ALT_INIT"/>
    <property type="molecule type" value="mRNA"/>
</dbReference>
<dbReference type="EMBL" id="BC006906">
    <property type="protein sequence ID" value="AAH06906.1"/>
    <property type="molecule type" value="mRNA"/>
</dbReference>
<dbReference type="EMBL" id="BC013564">
    <property type="protein sequence ID" value="AAH13564.1"/>
    <property type="status" value="ALT_INIT"/>
    <property type="molecule type" value="mRNA"/>
</dbReference>
<dbReference type="CCDS" id="CCDS22054.1"/>
<dbReference type="RefSeq" id="NP_082460.2">
    <property type="nucleotide sequence ID" value="NM_028184.3"/>
</dbReference>
<dbReference type="SMR" id="Q8CH62"/>
<dbReference type="FunCoup" id="Q8CH62">
    <property type="interactions" value="1496"/>
</dbReference>
<dbReference type="STRING" id="10090.ENSMUSP00000101515"/>
<dbReference type="iPTMnet" id="Q8CH62"/>
<dbReference type="PhosphoSitePlus" id="Q8CH62"/>
<dbReference type="PaxDb" id="10090-ENSMUSP00000033388"/>
<dbReference type="ProteomicsDB" id="294079"/>
<dbReference type="DNASU" id="72284"/>
<dbReference type="Ensembl" id="ENSMUST00000033388.13">
    <property type="protein sequence ID" value="ENSMUSP00000033388.7"/>
    <property type="gene ID" value="ENSMUSG00000031072.15"/>
</dbReference>
<dbReference type="GeneID" id="72284"/>
<dbReference type="KEGG" id="mmu:72284"/>
<dbReference type="AGR" id="MGI:1919534"/>
<dbReference type="CTD" id="220064"/>
<dbReference type="MGI" id="MGI:1919534">
    <property type="gene designation" value="LTO1"/>
</dbReference>
<dbReference type="eggNOG" id="KOG4595">
    <property type="taxonomic scope" value="Eukaryota"/>
</dbReference>
<dbReference type="GeneTree" id="ENSGT00390000009426"/>
<dbReference type="InParanoid" id="Q8CH62"/>
<dbReference type="BioGRID-ORCS" id="72284">
    <property type="hits" value="30 hits in 114 CRISPR screens"/>
</dbReference>
<dbReference type="ChiTaRS" id="LTO1">
    <property type="organism name" value="mouse"/>
</dbReference>
<dbReference type="PRO" id="PR:Q8CH62"/>
<dbReference type="Proteomes" id="UP000000589">
    <property type="component" value="Chromosome 7"/>
</dbReference>
<dbReference type="RNAct" id="Q8CH62">
    <property type="molecule type" value="protein"/>
</dbReference>
<dbReference type="GO" id="GO:0005634">
    <property type="term" value="C:nucleus"/>
    <property type="evidence" value="ECO:0000250"/>
    <property type="project" value="UniProtKB"/>
</dbReference>
<dbReference type="GO" id="GO:0051604">
    <property type="term" value="P:protein maturation"/>
    <property type="evidence" value="ECO:0000250"/>
    <property type="project" value="UniProtKB"/>
</dbReference>
<dbReference type="GO" id="GO:0042273">
    <property type="term" value="P:ribosomal large subunit biogenesis"/>
    <property type="evidence" value="ECO:0000250"/>
    <property type="project" value="UniProtKB"/>
</dbReference>
<dbReference type="GO" id="GO:0006413">
    <property type="term" value="P:translational initiation"/>
    <property type="evidence" value="ECO:0000250"/>
    <property type="project" value="UniProtKB"/>
</dbReference>
<dbReference type="InterPro" id="IPR019191">
    <property type="entry name" value="Essential_protein_Yae1_N"/>
</dbReference>
<dbReference type="InterPro" id="IPR052436">
    <property type="entry name" value="LTO1_adapter"/>
</dbReference>
<dbReference type="PANTHER" id="PTHR28532">
    <property type="entry name" value="GEO13458P1"/>
    <property type="match status" value="1"/>
</dbReference>
<dbReference type="PANTHER" id="PTHR28532:SF1">
    <property type="entry name" value="ORAL CANCER OVEREXPRESSED 1"/>
    <property type="match status" value="1"/>
</dbReference>
<dbReference type="Pfam" id="PF09811">
    <property type="entry name" value="Yae1_N"/>
    <property type="match status" value="1"/>
</dbReference>
<keyword id="KW-0007">Acetylation</keyword>
<keyword id="KW-0539">Nucleus</keyword>
<keyword id="KW-1185">Reference proteome</keyword>
<organism>
    <name type="scientific">Mus musculus</name>
    <name type="common">Mouse</name>
    <dbReference type="NCBI Taxonomy" id="10090"/>
    <lineage>
        <taxon>Eukaryota</taxon>
        <taxon>Metazoa</taxon>
        <taxon>Chordata</taxon>
        <taxon>Craniata</taxon>
        <taxon>Vertebrata</taxon>
        <taxon>Euteleostomi</taxon>
        <taxon>Mammalia</taxon>
        <taxon>Eutheria</taxon>
        <taxon>Euarchontoglires</taxon>
        <taxon>Glires</taxon>
        <taxon>Rodentia</taxon>
        <taxon>Myomorpha</taxon>
        <taxon>Muroidea</taxon>
        <taxon>Muridae</taxon>
        <taxon>Murinae</taxon>
        <taxon>Mus</taxon>
        <taxon>Mus</taxon>
    </lineage>
</organism>
<proteinExistence type="evidence at protein level"/>
<gene>
    <name evidence="4" type="primary">Lto1</name>
    <name evidence="4" type="synonym">Oraov1</name>
</gene>
<evidence type="ECO:0000250" key="1">
    <source>
        <dbReference type="UniProtKB" id="P53846"/>
    </source>
</evidence>
<evidence type="ECO:0000250" key="2">
    <source>
        <dbReference type="UniProtKB" id="Q8WV07"/>
    </source>
</evidence>
<evidence type="ECO:0000305" key="3"/>
<evidence type="ECO:0000312" key="4">
    <source>
        <dbReference type="MGI" id="MGI:1919534"/>
    </source>
</evidence>